<evidence type="ECO:0000255" key="1">
    <source>
        <dbReference type="HAMAP-Rule" id="MF_01080"/>
    </source>
</evidence>
<dbReference type="EC" id="5.4.99.25" evidence="1"/>
<dbReference type="EMBL" id="CP000046">
    <property type="protein sequence ID" value="AAW38121.1"/>
    <property type="molecule type" value="Genomic_DNA"/>
</dbReference>
<dbReference type="RefSeq" id="WP_000282305.1">
    <property type="nucleotide sequence ID" value="NZ_JBGOFO010000002.1"/>
</dbReference>
<dbReference type="SMR" id="Q5HGG0"/>
<dbReference type="KEGG" id="sac:SACOL1290"/>
<dbReference type="HOGENOM" id="CLU_032087_0_1_9"/>
<dbReference type="Proteomes" id="UP000000530">
    <property type="component" value="Chromosome"/>
</dbReference>
<dbReference type="GO" id="GO:0003723">
    <property type="term" value="F:RNA binding"/>
    <property type="evidence" value="ECO:0007669"/>
    <property type="project" value="InterPro"/>
</dbReference>
<dbReference type="GO" id="GO:0160148">
    <property type="term" value="F:tRNA pseudouridine(55) synthase activity"/>
    <property type="evidence" value="ECO:0007669"/>
    <property type="project" value="UniProtKB-EC"/>
</dbReference>
<dbReference type="GO" id="GO:1990481">
    <property type="term" value="P:mRNA pseudouridine synthesis"/>
    <property type="evidence" value="ECO:0007669"/>
    <property type="project" value="TreeGrafter"/>
</dbReference>
<dbReference type="GO" id="GO:0031119">
    <property type="term" value="P:tRNA pseudouridine synthesis"/>
    <property type="evidence" value="ECO:0007669"/>
    <property type="project" value="UniProtKB-UniRule"/>
</dbReference>
<dbReference type="CDD" id="cd02573">
    <property type="entry name" value="PseudoU_synth_EcTruB"/>
    <property type="match status" value="1"/>
</dbReference>
<dbReference type="FunFam" id="3.30.2350.10:FF:000011">
    <property type="entry name" value="tRNA pseudouridine synthase B"/>
    <property type="match status" value="1"/>
</dbReference>
<dbReference type="Gene3D" id="3.30.2350.10">
    <property type="entry name" value="Pseudouridine synthase"/>
    <property type="match status" value="1"/>
</dbReference>
<dbReference type="HAMAP" id="MF_01080">
    <property type="entry name" value="TruB_bact"/>
    <property type="match status" value="1"/>
</dbReference>
<dbReference type="InterPro" id="IPR020103">
    <property type="entry name" value="PsdUridine_synth_cat_dom_sf"/>
</dbReference>
<dbReference type="InterPro" id="IPR002501">
    <property type="entry name" value="PsdUridine_synth_N"/>
</dbReference>
<dbReference type="InterPro" id="IPR014780">
    <property type="entry name" value="tRNA_psdUridine_synth_TruB"/>
</dbReference>
<dbReference type="InterPro" id="IPR032819">
    <property type="entry name" value="TruB_C"/>
</dbReference>
<dbReference type="NCBIfam" id="TIGR00431">
    <property type="entry name" value="TruB"/>
    <property type="match status" value="1"/>
</dbReference>
<dbReference type="PANTHER" id="PTHR13767:SF2">
    <property type="entry name" value="PSEUDOURIDYLATE SYNTHASE TRUB1"/>
    <property type="match status" value="1"/>
</dbReference>
<dbReference type="PANTHER" id="PTHR13767">
    <property type="entry name" value="TRNA-PSEUDOURIDINE SYNTHASE"/>
    <property type="match status" value="1"/>
</dbReference>
<dbReference type="Pfam" id="PF16198">
    <property type="entry name" value="TruB_C_2"/>
    <property type="match status" value="1"/>
</dbReference>
<dbReference type="Pfam" id="PF01509">
    <property type="entry name" value="TruB_N"/>
    <property type="match status" value="1"/>
</dbReference>
<dbReference type="SUPFAM" id="SSF55120">
    <property type="entry name" value="Pseudouridine synthase"/>
    <property type="match status" value="1"/>
</dbReference>
<comment type="function">
    <text evidence="1">Responsible for synthesis of pseudouridine from uracil-55 in the psi GC loop of transfer RNAs.</text>
</comment>
<comment type="catalytic activity">
    <reaction evidence="1">
        <text>uridine(55) in tRNA = pseudouridine(55) in tRNA</text>
        <dbReference type="Rhea" id="RHEA:42532"/>
        <dbReference type="Rhea" id="RHEA-COMP:10101"/>
        <dbReference type="Rhea" id="RHEA-COMP:10102"/>
        <dbReference type="ChEBI" id="CHEBI:65314"/>
        <dbReference type="ChEBI" id="CHEBI:65315"/>
        <dbReference type="EC" id="5.4.99.25"/>
    </reaction>
</comment>
<comment type="similarity">
    <text evidence="1">Belongs to the pseudouridine synthase TruB family. Type 1 subfamily.</text>
</comment>
<protein>
    <recommendedName>
        <fullName evidence="1">tRNA pseudouridine synthase B</fullName>
        <ecNumber evidence="1">5.4.99.25</ecNumber>
    </recommendedName>
    <alternativeName>
        <fullName evidence="1">tRNA pseudouridine(55) synthase</fullName>
        <shortName evidence="1">Psi55 synthase</shortName>
    </alternativeName>
    <alternativeName>
        <fullName evidence="1">tRNA pseudouridylate synthase</fullName>
    </alternativeName>
    <alternativeName>
        <fullName evidence="1">tRNA-uridine isomerase</fullName>
    </alternativeName>
</protein>
<name>TRUB_STAAC</name>
<sequence length="305" mass="34593">MYNGILPVYKERGLTSHDVVFKLRKILKTKKIGHTGTLDPEVAGVLPVCIGNATRVSDYVMDMGKAYEATVSIGRSTTTEDQTGDTLETKGVHSADFNKDDIDRLLESFKGIIEQIPPMYSSVKVNGKKLYEYARNNETVERPKRKVNIKDIGRISELDFKENECHFKIRVICGKGTYIRTLATDIGVKLGFPAHMSKLTRIESGGFVLKDSLTLEQIKELHEQDSLQNKLFPLEYGLKGLPSIKIKDSHIKKRILNGQKFNKNEFDNKIKDQIVFIDDDSEKVLAIYMVHPTKESEIKPKKVFN</sequence>
<feature type="chain" id="PRO_0000121902" description="tRNA pseudouridine synthase B">
    <location>
        <begin position="1"/>
        <end position="305"/>
    </location>
</feature>
<feature type="active site" description="Nucleophile" evidence="1">
    <location>
        <position position="39"/>
    </location>
</feature>
<organism>
    <name type="scientific">Staphylococcus aureus (strain COL)</name>
    <dbReference type="NCBI Taxonomy" id="93062"/>
    <lineage>
        <taxon>Bacteria</taxon>
        <taxon>Bacillati</taxon>
        <taxon>Bacillota</taxon>
        <taxon>Bacilli</taxon>
        <taxon>Bacillales</taxon>
        <taxon>Staphylococcaceae</taxon>
        <taxon>Staphylococcus</taxon>
    </lineage>
</organism>
<keyword id="KW-0413">Isomerase</keyword>
<keyword id="KW-0819">tRNA processing</keyword>
<proteinExistence type="inferred from homology"/>
<accession>Q5HGG0</accession>
<gene>
    <name evidence="1" type="primary">truB</name>
    <name type="ordered locus">SACOL1290</name>
</gene>
<reference key="1">
    <citation type="journal article" date="2005" name="J. Bacteriol.">
        <title>Insights on evolution of virulence and resistance from the complete genome analysis of an early methicillin-resistant Staphylococcus aureus strain and a biofilm-producing methicillin-resistant Staphylococcus epidermidis strain.</title>
        <authorList>
            <person name="Gill S.R."/>
            <person name="Fouts D.E."/>
            <person name="Archer G.L."/>
            <person name="Mongodin E.F."/>
            <person name="DeBoy R.T."/>
            <person name="Ravel J."/>
            <person name="Paulsen I.T."/>
            <person name="Kolonay J.F."/>
            <person name="Brinkac L.M."/>
            <person name="Beanan M.J."/>
            <person name="Dodson R.J."/>
            <person name="Daugherty S.C."/>
            <person name="Madupu R."/>
            <person name="Angiuoli S.V."/>
            <person name="Durkin A.S."/>
            <person name="Haft D.H."/>
            <person name="Vamathevan J.J."/>
            <person name="Khouri H."/>
            <person name="Utterback T.R."/>
            <person name="Lee C."/>
            <person name="Dimitrov G."/>
            <person name="Jiang L."/>
            <person name="Qin H."/>
            <person name="Weidman J."/>
            <person name="Tran K."/>
            <person name="Kang K.H."/>
            <person name="Hance I.R."/>
            <person name="Nelson K.E."/>
            <person name="Fraser C.M."/>
        </authorList>
    </citation>
    <scope>NUCLEOTIDE SEQUENCE [LARGE SCALE GENOMIC DNA]</scope>
    <source>
        <strain>COL</strain>
    </source>
</reference>